<feature type="chain" id="PRO_1000040482" description="6,7-dimethyl-8-ribityllumazine synthase">
    <location>
        <begin position="1"/>
        <end position="158"/>
    </location>
</feature>
<feature type="active site" description="Proton donor" evidence="1">
    <location>
        <position position="93"/>
    </location>
</feature>
<feature type="binding site" evidence="1">
    <location>
        <position position="23"/>
    </location>
    <ligand>
        <name>5-amino-6-(D-ribitylamino)uracil</name>
        <dbReference type="ChEBI" id="CHEBI:15934"/>
    </ligand>
</feature>
<feature type="binding site" evidence="1">
    <location>
        <begin position="61"/>
        <end position="63"/>
    </location>
    <ligand>
        <name>5-amino-6-(D-ribitylamino)uracil</name>
        <dbReference type="ChEBI" id="CHEBI:15934"/>
    </ligand>
</feature>
<feature type="binding site" evidence="1">
    <location>
        <begin position="85"/>
        <end position="87"/>
    </location>
    <ligand>
        <name>5-amino-6-(D-ribitylamino)uracil</name>
        <dbReference type="ChEBI" id="CHEBI:15934"/>
    </ligand>
</feature>
<feature type="binding site" evidence="1">
    <location>
        <begin position="90"/>
        <end position="91"/>
    </location>
    <ligand>
        <name>(2S)-2-hydroxy-3-oxobutyl phosphate</name>
        <dbReference type="ChEBI" id="CHEBI:58830"/>
    </ligand>
</feature>
<feature type="binding site" evidence="1">
    <location>
        <position position="118"/>
    </location>
    <ligand>
        <name>5-amino-6-(D-ribitylamino)uracil</name>
        <dbReference type="ChEBI" id="CHEBI:15934"/>
    </ligand>
</feature>
<feature type="binding site" evidence="1">
    <location>
        <position position="132"/>
    </location>
    <ligand>
        <name>(2S)-2-hydroxy-3-oxobutyl phosphate</name>
        <dbReference type="ChEBI" id="CHEBI:58830"/>
    </ligand>
</feature>
<comment type="function">
    <text evidence="1">Catalyzes the formation of 6,7-dimethyl-8-ribityllumazine by condensation of 5-amino-6-(D-ribitylamino)uracil with 3,4-dihydroxy-2-butanone 4-phosphate. This is the penultimate step in the biosynthesis of riboflavin.</text>
</comment>
<comment type="catalytic activity">
    <reaction evidence="1">
        <text>(2S)-2-hydroxy-3-oxobutyl phosphate + 5-amino-6-(D-ribitylamino)uracil = 6,7-dimethyl-8-(1-D-ribityl)lumazine + phosphate + 2 H2O + H(+)</text>
        <dbReference type="Rhea" id="RHEA:26152"/>
        <dbReference type="ChEBI" id="CHEBI:15377"/>
        <dbReference type="ChEBI" id="CHEBI:15378"/>
        <dbReference type="ChEBI" id="CHEBI:15934"/>
        <dbReference type="ChEBI" id="CHEBI:43474"/>
        <dbReference type="ChEBI" id="CHEBI:58201"/>
        <dbReference type="ChEBI" id="CHEBI:58830"/>
        <dbReference type="EC" id="2.5.1.78"/>
    </reaction>
</comment>
<comment type="pathway">
    <text evidence="1">Cofactor biosynthesis; riboflavin biosynthesis; riboflavin from 2-hydroxy-3-oxobutyl phosphate and 5-amino-6-(D-ribitylamino)uracil: step 1/2.</text>
</comment>
<comment type="similarity">
    <text evidence="1">Belongs to the DMRL synthase family.</text>
</comment>
<keyword id="KW-0686">Riboflavin biosynthesis</keyword>
<keyword id="KW-0808">Transferase</keyword>
<name>RISB_PROM9</name>
<reference key="1">
    <citation type="journal article" date="2006" name="Science">
        <title>Genomic islands and the ecology and evolution of Prochlorococcus.</title>
        <authorList>
            <person name="Coleman M.L."/>
            <person name="Sullivan M.B."/>
            <person name="Martiny A.C."/>
            <person name="Steglich C."/>
            <person name="Barry K."/>
            <person name="Delong E.F."/>
            <person name="Chisholm S.W."/>
        </authorList>
    </citation>
    <scope>NUCLEOTIDE SEQUENCE [LARGE SCALE GENOMIC DNA]</scope>
    <source>
        <strain>MIT 9312</strain>
    </source>
</reference>
<dbReference type="EC" id="2.5.1.78" evidence="1"/>
<dbReference type="EMBL" id="CP000111">
    <property type="protein sequence ID" value="ABB50796.1"/>
    <property type="molecule type" value="Genomic_DNA"/>
</dbReference>
<dbReference type="RefSeq" id="WP_011377277.1">
    <property type="nucleotide sequence ID" value="NC_007577.1"/>
</dbReference>
<dbReference type="SMR" id="Q317Z9"/>
<dbReference type="STRING" id="74546.PMT9312_1735"/>
<dbReference type="KEGG" id="pmi:PMT9312_1735"/>
<dbReference type="eggNOG" id="COG0054">
    <property type="taxonomic scope" value="Bacteria"/>
</dbReference>
<dbReference type="HOGENOM" id="CLU_089358_1_0_3"/>
<dbReference type="OrthoDB" id="9809709at2"/>
<dbReference type="UniPathway" id="UPA00275">
    <property type="reaction ID" value="UER00404"/>
</dbReference>
<dbReference type="Proteomes" id="UP000002715">
    <property type="component" value="Chromosome"/>
</dbReference>
<dbReference type="GO" id="GO:0005829">
    <property type="term" value="C:cytosol"/>
    <property type="evidence" value="ECO:0007669"/>
    <property type="project" value="TreeGrafter"/>
</dbReference>
<dbReference type="GO" id="GO:0009349">
    <property type="term" value="C:riboflavin synthase complex"/>
    <property type="evidence" value="ECO:0007669"/>
    <property type="project" value="InterPro"/>
</dbReference>
<dbReference type="GO" id="GO:0000906">
    <property type="term" value="F:6,7-dimethyl-8-ribityllumazine synthase activity"/>
    <property type="evidence" value="ECO:0007669"/>
    <property type="project" value="UniProtKB-UniRule"/>
</dbReference>
<dbReference type="GO" id="GO:0009231">
    <property type="term" value="P:riboflavin biosynthetic process"/>
    <property type="evidence" value="ECO:0007669"/>
    <property type="project" value="UniProtKB-UniRule"/>
</dbReference>
<dbReference type="CDD" id="cd09209">
    <property type="entry name" value="Lumazine_synthase-I"/>
    <property type="match status" value="1"/>
</dbReference>
<dbReference type="Gene3D" id="3.40.50.960">
    <property type="entry name" value="Lumazine/riboflavin synthase"/>
    <property type="match status" value="1"/>
</dbReference>
<dbReference type="HAMAP" id="MF_00178">
    <property type="entry name" value="Lumazine_synth"/>
    <property type="match status" value="1"/>
</dbReference>
<dbReference type="InterPro" id="IPR034964">
    <property type="entry name" value="LS"/>
</dbReference>
<dbReference type="InterPro" id="IPR002180">
    <property type="entry name" value="LS/RS"/>
</dbReference>
<dbReference type="InterPro" id="IPR036467">
    <property type="entry name" value="LS/RS_sf"/>
</dbReference>
<dbReference type="NCBIfam" id="TIGR00114">
    <property type="entry name" value="lumazine-synth"/>
    <property type="match status" value="1"/>
</dbReference>
<dbReference type="PANTHER" id="PTHR21058:SF0">
    <property type="entry name" value="6,7-DIMETHYL-8-RIBITYLLUMAZINE SYNTHASE"/>
    <property type="match status" value="1"/>
</dbReference>
<dbReference type="PANTHER" id="PTHR21058">
    <property type="entry name" value="6,7-DIMETHYL-8-RIBITYLLUMAZINE SYNTHASE DMRL SYNTHASE LUMAZINE SYNTHASE"/>
    <property type="match status" value="1"/>
</dbReference>
<dbReference type="Pfam" id="PF00885">
    <property type="entry name" value="DMRL_synthase"/>
    <property type="match status" value="1"/>
</dbReference>
<dbReference type="SUPFAM" id="SSF52121">
    <property type="entry name" value="Lumazine synthase"/>
    <property type="match status" value="1"/>
</dbReference>
<organism>
    <name type="scientific">Prochlorococcus marinus (strain MIT 9312)</name>
    <dbReference type="NCBI Taxonomy" id="74546"/>
    <lineage>
        <taxon>Bacteria</taxon>
        <taxon>Bacillati</taxon>
        <taxon>Cyanobacteriota</taxon>
        <taxon>Cyanophyceae</taxon>
        <taxon>Synechococcales</taxon>
        <taxon>Prochlorococcaceae</taxon>
        <taxon>Prochlorococcus</taxon>
    </lineage>
</organism>
<protein>
    <recommendedName>
        <fullName evidence="1">6,7-dimethyl-8-ribityllumazine synthase</fullName>
        <shortName evidence="1">DMRL synthase</shortName>
        <shortName evidence="1">LS</shortName>
        <shortName evidence="1">Lumazine synthase</shortName>
        <ecNumber evidence="1">2.5.1.78</ecNumber>
    </recommendedName>
</protein>
<gene>
    <name evidence="1" type="primary">ribH</name>
    <name type="ordered locus">PMT9312_1735</name>
</gene>
<accession>Q317Z9</accession>
<sequence>MAIFEGSFTSASTLKVGIVIARFNDLITNKILSGCLDCLKRHGLDTSELSNQVDIVWVPGSFELPIAAKTLMKKKSYDVVIALGAVIRGETSHYDVVISEASKGISQVSNENNVPIIFGVLTTDTMQQALERAGIKNNLGWNYALQAIEMGSLIKNLN</sequence>
<evidence type="ECO:0000255" key="1">
    <source>
        <dbReference type="HAMAP-Rule" id="MF_00178"/>
    </source>
</evidence>
<proteinExistence type="inferred from homology"/>